<keyword id="KW-0903">Direct protein sequencing</keyword>
<keyword id="KW-1015">Disulfide bond</keyword>
<keyword id="KW-0964">Secreted</keyword>
<keyword id="KW-0732">Signal</keyword>
<organism>
    <name type="scientific">Scolopendra dehaani</name>
    <name type="common">Thai centipede</name>
    <name type="synonym">Scolopendra subspinipes dehaani</name>
    <dbReference type="NCBI Taxonomy" id="2609776"/>
    <lineage>
        <taxon>Eukaryota</taxon>
        <taxon>Metazoa</taxon>
        <taxon>Ecdysozoa</taxon>
        <taxon>Arthropoda</taxon>
        <taxon>Myriapoda</taxon>
        <taxon>Chilopoda</taxon>
        <taxon>Pleurostigmophora</taxon>
        <taxon>Scolopendromorpha</taxon>
        <taxon>Scolopendridae</taxon>
        <taxon>Scolopendra</taxon>
    </lineage>
</organism>
<reference key="1">
    <citation type="journal article" date="2012" name="J. Proteome Res.">
        <title>Venomic and transcriptomic analysis of centipede Scolopendra subspinipes dehaani.</title>
        <authorList>
            <person name="Liu Z.C."/>
            <person name="Zhang R."/>
            <person name="Zhao F."/>
            <person name="Chen Z.M."/>
            <person name="Liu H.W."/>
            <person name="Wang Y.J."/>
            <person name="Jiang P."/>
            <person name="Zhang Y."/>
            <person name="Wu Y."/>
            <person name="Ding J.P."/>
            <person name="Lee W.H."/>
            <person name="Zhang Y."/>
        </authorList>
    </citation>
    <scope>NUCLEOTIDE SEQUENCE [MRNA]</scope>
    <scope>PROTEIN SEQUENCE OF 24-53</scope>
    <scope>SUBCELLULAR LOCATION</scope>
    <scope>MASS SPECTROMETRY</scope>
    <source>
        <tissue>Venom</tissue>
        <tissue>Venom gland</tissue>
    </source>
</reference>
<evidence type="ECO:0000269" key="1">
    <source>
    </source>
</evidence>
<evidence type="ECO:0000303" key="2">
    <source>
    </source>
</evidence>
<evidence type="ECO:0000305" key="3"/>
<evidence type="ECO:0000305" key="4">
    <source>
    </source>
</evidence>
<name>VA558_SCODE</name>
<sequence length="210" mass="23188">MNILLPSTLFVLLMFQIIGSGMGCDMKVRGLDANMKKMILDLHNKKRQIVANGQQSGQPSAANMKELHWNDEIAANAQRSAETCVFEHTAKSLRKTTKYSYLGENIYKGSYPDPIPRSVNAWYDEVKDVTPAVVKSFSSGGPMIGHYTQMVWANTEALDCGLVTASDRNSYLFCQYGPGGNYRSQPIYKQGPPASDCKNGKSSKYPGLCN</sequence>
<accession>P0DPV2</accession>
<comment type="subcellular location">
    <subcellularLocation>
        <location evidence="1">Secreted</location>
    </subcellularLocation>
</comment>
<comment type="tissue specificity">
    <text evidence="4">Expressed by the venom gland.</text>
</comment>
<comment type="PTM">
    <text evidence="3">Contains 3 disulfide bonds.</text>
</comment>
<comment type="mass spectrometry" mass="20700.6" method="MALDI" evidence="1"/>
<comment type="similarity">
    <text evidence="3">Belongs to the CRISP family. Venom allergen 5-like subfamily.</text>
</comment>
<feature type="signal peptide" evidence="1">
    <location>
        <begin position="1"/>
        <end position="23"/>
    </location>
</feature>
<feature type="chain" id="PRO_0000446848" description="Scoloptoxin SSD558" evidence="1">
    <location>
        <begin position="24"/>
        <end position="210"/>
    </location>
</feature>
<protein>
    <recommendedName>
        <fullName evidence="2">Scoloptoxin SSD558</fullName>
    </recommendedName>
    <alternativeName>
        <fullName evidence="3">Cysteine-rich venom protein</fullName>
        <shortName evidence="3">CRVP</shortName>
    </alternativeName>
</protein>
<proteinExistence type="evidence at protein level"/>
<dbReference type="EMBL" id="KC144555">
    <property type="status" value="NOT_ANNOTATED_CDS"/>
    <property type="molecule type" value="mRNA"/>
</dbReference>
<dbReference type="SMR" id="P0DPV2"/>
<dbReference type="GO" id="GO:0005576">
    <property type="term" value="C:extracellular region"/>
    <property type="evidence" value="ECO:0007669"/>
    <property type="project" value="UniProtKB-SubCell"/>
</dbReference>
<dbReference type="CDD" id="cd05380">
    <property type="entry name" value="CAP_euk"/>
    <property type="match status" value="1"/>
</dbReference>
<dbReference type="Gene3D" id="3.40.33.10">
    <property type="entry name" value="CAP"/>
    <property type="match status" value="1"/>
</dbReference>
<dbReference type="InterPro" id="IPR018244">
    <property type="entry name" value="Allrgn_V5/Tpx1_CS"/>
</dbReference>
<dbReference type="InterPro" id="IPR014044">
    <property type="entry name" value="CAP_dom"/>
</dbReference>
<dbReference type="InterPro" id="IPR035940">
    <property type="entry name" value="CAP_sf"/>
</dbReference>
<dbReference type="InterPro" id="IPR001283">
    <property type="entry name" value="CRISP-related"/>
</dbReference>
<dbReference type="InterPro" id="IPR002413">
    <property type="entry name" value="V5_allergen-like"/>
</dbReference>
<dbReference type="PANTHER" id="PTHR10334">
    <property type="entry name" value="CYSTEINE-RICH SECRETORY PROTEIN-RELATED"/>
    <property type="match status" value="1"/>
</dbReference>
<dbReference type="Pfam" id="PF00188">
    <property type="entry name" value="CAP"/>
    <property type="match status" value="1"/>
</dbReference>
<dbReference type="PRINTS" id="PR00838">
    <property type="entry name" value="V5ALLERGEN"/>
</dbReference>
<dbReference type="PRINTS" id="PR00837">
    <property type="entry name" value="V5TPXLIKE"/>
</dbReference>
<dbReference type="SMART" id="SM00198">
    <property type="entry name" value="SCP"/>
    <property type="match status" value="1"/>
</dbReference>
<dbReference type="SUPFAM" id="SSF55797">
    <property type="entry name" value="PR-1-like"/>
    <property type="match status" value="1"/>
</dbReference>
<dbReference type="PROSITE" id="PS01009">
    <property type="entry name" value="CRISP_1"/>
    <property type="match status" value="1"/>
</dbReference>
<dbReference type="PROSITE" id="PS01010">
    <property type="entry name" value="CRISP_2"/>
    <property type="match status" value="1"/>
</dbReference>